<accession>P53260</accession>
<accession>D6VUN4</accession>
<accession>Q6Q591</accession>
<feature type="chain" id="PRO_0000202811" description="Glutamyl-tRNA(Gln) amidotransferase subunit F, mitochondrial">
    <location>
        <begin position="1"/>
        <end position="183"/>
    </location>
</feature>
<feature type="sequence conflict" description="In Ref. 3; AAS56651." evidence="7" ref="3">
    <original>R</original>
    <variation>G</variation>
    <location>
        <position position="9"/>
    </location>
</feature>
<feature type="helix" evidence="8">
    <location>
        <begin position="39"/>
        <end position="45"/>
    </location>
</feature>
<feature type="helix" evidence="8">
    <location>
        <begin position="53"/>
        <end position="56"/>
    </location>
</feature>
<feature type="helix" evidence="8">
    <location>
        <begin position="71"/>
        <end position="80"/>
    </location>
</feature>
<feature type="helix" evidence="8">
    <location>
        <begin position="90"/>
        <end position="104"/>
    </location>
</feature>
<feature type="helix" evidence="8">
    <location>
        <begin position="105"/>
        <end position="109"/>
    </location>
</feature>
<feature type="helix" evidence="8">
    <location>
        <begin position="135"/>
        <end position="143"/>
    </location>
</feature>
<feature type="helix" evidence="8">
    <location>
        <begin position="149"/>
        <end position="151"/>
    </location>
</feature>
<feature type="turn" evidence="8">
    <location>
        <begin position="160"/>
        <end position="163"/>
    </location>
</feature>
<feature type="strand" evidence="8">
    <location>
        <begin position="171"/>
        <end position="175"/>
    </location>
</feature>
<reference key="1">
    <citation type="journal article" date="1997" name="Nature">
        <title>The nucleotide sequence of Saccharomyces cerevisiae chromosome VII.</title>
        <authorList>
            <person name="Tettelin H."/>
            <person name="Agostoni-Carbone M.L."/>
            <person name="Albermann K."/>
            <person name="Albers M."/>
            <person name="Arroyo J."/>
            <person name="Backes U."/>
            <person name="Barreiros T."/>
            <person name="Bertani I."/>
            <person name="Bjourson A.J."/>
            <person name="Brueckner M."/>
            <person name="Bruschi C.V."/>
            <person name="Carignani G."/>
            <person name="Castagnoli L."/>
            <person name="Cerdan E."/>
            <person name="Clemente M.L."/>
            <person name="Coblenz A."/>
            <person name="Coglievina M."/>
            <person name="Coissac E."/>
            <person name="Defoor E."/>
            <person name="Del Bino S."/>
            <person name="Delius H."/>
            <person name="Delneri D."/>
            <person name="de Wergifosse P."/>
            <person name="Dujon B."/>
            <person name="Durand P."/>
            <person name="Entian K.-D."/>
            <person name="Eraso P."/>
            <person name="Escribano V."/>
            <person name="Fabiani L."/>
            <person name="Fartmann B."/>
            <person name="Feroli F."/>
            <person name="Feuermann M."/>
            <person name="Frontali L."/>
            <person name="Garcia-Gonzalez M."/>
            <person name="Garcia-Saez M.I."/>
            <person name="Goffeau A."/>
            <person name="Guerreiro P."/>
            <person name="Hani J."/>
            <person name="Hansen M."/>
            <person name="Hebling U."/>
            <person name="Hernandez K."/>
            <person name="Heumann K."/>
            <person name="Hilger F."/>
            <person name="Hofmann B."/>
            <person name="Indge K.J."/>
            <person name="James C.M."/>
            <person name="Klima R."/>
            <person name="Koetter P."/>
            <person name="Kramer B."/>
            <person name="Kramer W."/>
            <person name="Lauquin G."/>
            <person name="Leuther H."/>
            <person name="Louis E.J."/>
            <person name="Maillier E."/>
            <person name="Marconi A."/>
            <person name="Martegani E."/>
            <person name="Mazon M.J."/>
            <person name="Mazzoni C."/>
            <person name="McReynolds A.D.K."/>
            <person name="Melchioretto P."/>
            <person name="Mewes H.-W."/>
            <person name="Minenkova O."/>
            <person name="Mueller-Auer S."/>
            <person name="Nawrocki A."/>
            <person name="Netter P."/>
            <person name="Neu R."/>
            <person name="Nombela C."/>
            <person name="Oliver S.G."/>
            <person name="Panzeri L."/>
            <person name="Paoluzi S."/>
            <person name="Plevani P."/>
            <person name="Portetelle D."/>
            <person name="Portillo F."/>
            <person name="Potier S."/>
            <person name="Purnelle B."/>
            <person name="Rieger M."/>
            <person name="Riles L."/>
            <person name="Rinaldi T."/>
            <person name="Robben J."/>
            <person name="Rodrigues-Pousada C."/>
            <person name="Rodriguez-Belmonte E."/>
            <person name="Rodriguez-Torres A.M."/>
            <person name="Rose M."/>
            <person name="Ruzzi M."/>
            <person name="Saliola M."/>
            <person name="Sanchez-Perez M."/>
            <person name="Schaefer B."/>
            <person name="Schaefer M."/>
            <person name="Scharfe M."/>
            <person name="Schmidheini T."/>
            <person name="Schreer A."/>
            <person name="Skala J."/>
            <person name="Souciet J.-L."/>
            <person name="Steensma H.Y."/>
            <person name="Talla E."/>
            <person name="Thierry A."/>
            <person name="Vandenbol M."/>
            <person name="van der Aart Q.J.M."/>
            <person name="Van Dyck L."/>
            <person name="Vanoni M."/>
            <person name="Verhasselt P."/>
            <person name="Voet M."/>
            <person name="Volckaert G."/>
            <person name="Wambutt R."/>
            <person name="Watson M.D."/>
            <person name="Weber N."/>
            <person name="Wedler E."/>
            <person name="Wedler H."/>
            <person name="Wipfli P."/>
            <person name="Wolf K."/>
            <person name="Wright L.F."/>
            <person name="Zaccaria P."/>
            <person name="Zimmermann M."/>
            <person name="Zollner A."/>
            <person name="Kleine K."/>
        </authorList>
    </citation>
    <scope>NUCLEOTIDE SEQUENCE [LARGE SCALE GENOMIC DNA]</scope>
    <source>
        <strain>ATCC 204508 / S288c</strain>
    </source>
</reference>
<reference key="2">
    <citation type="journal article" date="2014" name="G3 (Bethesda)">
        <title>The reference genome sequence of Saccharomyces cerevisiae: Then and now.</title>
        <authorList>
            <person name="Engel S.R."/>
            <person name="Dietrich F.S."/>
            <person name="Fisk D.G."/>
            <person name="Binkley G."/>
            <person name="Balakrishnan R."/>
            <person name="Costanzo M.C."/>
            <person name="Dwight S.S."/>
            <person name="Hitz B.C."/>
            <person name="Karra K."/>
            <person name="Nash R.S."/>
            <person name="Weng S."/>
            <person name="Wong E.D."/>
            <person name="Lloyd P."/>
            <person name="Skrzypek M.S."/>
            <person name="Miyasato S.R."/>
            <person name="Simison M."/>
            <person name="Cherry J.M."/>
        </authorList>
    </citation>
    <scope>GENOME REANNOTATION</scope>
    <source>
        <strain>ATCC 204508 / S288c</strain>
    </source>
</reference>
<reference key="3">
    <citation type="journal article" date="2007" name="Genome Res.">
        <title>Approaching a complete repository of sequence-verified protein-encoding clones for Saccharomyces cerevisiae.</title>
        <authorList>
            <person name="Hu Y."/>
            <person name="Rolfs A."/>
            <person name="Bhullar B."/>
            <person name="Murthy T.V.S."/>
            <person name="Zhu C."/>
            <person name="Berger M.F."/>
            <person name="Camargo A.A."/>
            <person name="Kelley F."/>
            <person name="McCarron S."/>
            <person name="Jepson D."/>
            <person name="Richardson A."/>
            <person name="Raphael J."/>
            <person name="Moreira D."/>
            <person name="Taycher E."/>
            <person name="Zuo D."/>
            <person name="Mohr S."/>
            <person name="Kane M.F."/>
            <person name="Williamson J."/>
            <person name="Simpson A.J.G."/>
            <person name="Bulyk M.L."/>
            <person name="Harlow E."/>
            <person name="Marsischky G."/>
            <person name="Kolodner R.D."/>
            <person name="LaBaer J."/>
        </authorList>
    </citation>
    <scope>NUCLEOTIDE SEQUENCE [GENOMIC DNA]</scope>
    <source>
        <strain>ATCC 204508 / S288c</strain>
    </source>
</reference>
<reference key="4">
    <citation type="journal article" date="2003" name="Nature">
        <title>Global analysis of protein localization in budding yeast.</title>
        <authorList>
            <person name="Huh W.-K."/>
            <person name="Falvo J.V."/>
            <person name="Gerke L.C."/>
            <person name="Carroll A.S."/>
            <person name="Howson R.W."/>
            <person name="Weissman J.S."/>
            <person name="O'Shea E.K."/>
        </authorList>
    </citation>
    <scope>SUBCELLULAR LOCATION [LARGE SCALE ANALYSIS]</scope>
</reference>
<reference key="5">
    <citation type="journal article" date="2003" name="Nature">
        <title>Global analysis of protein expression in yeast.</title>
        <authorList>
            <person name="Ghaemmaghami S."/>
            <person name="Huh W.-K."/>
            <person name="Bower K."/>
            <person name="Howson R.W."/>
            <person name="Belle A."/>
            <person name="Dephoure N."/>
            <person name="O'Shea E.K."/>
            <person name="Weissman J.S."/>
        </authorList>
    </citation>
    <scope>LEVEL OF PROTEIN EXPRESSION [LARGE SCALE ANALYSIS]</scope>
</reference>
<reference key="6">
    <citation type="journal article" date="2006" name="J. Proteome Res.">
        <title>Toward the complete yeast mitochondrial proteome: multidimensional separation techniques for mitochondrial proteomics.</title>
        <authorList>
            <person name="Reinders J."/>
            <person name="Zahedi R.P."/>
            <person name="Pfanner N."/>
            <person name="Meisinger C."/>
            <person name="Sickmann A."/>
        </authorList>
    </citation>
    <scope>SUBCELLULAR LOCATION [LARGE SCALE ANALYSIS]</scope>
    <scope>IDENTIFICATION BY MASS SPECTROMETRY</scope>
</reference>
<reference key="7">
    <citation type="journal article" date="2009" name="Genes Dev.">
        <title>Yeast mitochondrial Gln-tRNA(Gln) is generated by a GatFAB-mediated transamidation pathway involving Arc1p-controlled subcellular sorting of cytosolic GluRS.</title>
        <authorList>
            <person name="Frechin M."/>
            <person name="Senger B."/>
            <person name="Braye M."/>
            <person name="Kern D."/>
            <person name="Martin R.P."/>
            <person name="Becker H.D."/>
        </authorList>
    </citation>
    <scope>FUNCTION</scope>
    <scope>INTERACTION WITH PET112 AND HER2</scope>
    <scope>SUBCELLULAR LOCATION</scope>
</reference>
<reference key="8">
    <citation type="journal article" date="2011" name="J. Biol. Chem.">
        <title>Characterization of Gtf1p, the connector subunit of yeast mitochondrial tRNA-dependent amidotransferase.</title>
        <authorList>
            <person name="Barros M.H."/>
            <person name="Rak M."/>
            <person name="Paulela J.A."/>
            <person name="Tzagoloff A."/>
        </authorList>
    </citation>
    <scope>SUBCELLULAR LOCATION</scope>
    <scope>FUNCTION</scope>
</reference>
<comment type="function">
    <text evidence="1 5 6">Allows the formation of correctly charged Gln-tRNA(Gln) through the transamidation of misacylated Glu-tRNA(Gln) in the mitochondria. The reaction takes place in the presence of glutamine and ATP through an activated gamma-phospho-Glu-tRNA(Gln). Required for proper protein synthesis within the mitochondrion.</text>
</comment>
<comment type="catalytic activity">
    <reaction evidence="1">
        <text>L-glutamyl-tRNA(Gln) + L-glutamine + ATP + H2O = L-glutaminyl-tRNA(Gln) + L-glutamate + ADP + phosphate + H(+)</text>
        <dbReference type="Rhea" id="RHEA:17521"/>
        <dbReference type="Rhea" id="RHEA-COMP:9681"/>
        <dbReference type="Rhea" id="RHEA-COMP:9684"/>
        <dbReference type="ChEBI" id="CHEBI:15377"/>
        <dbReference type="ChEBI" id="CHEBI:15378"/>
        <dbReference type="ChEBI" id="CHEBI:29985"/>
        <dbReference type="ChEBI" id="CHEBI:30616"/>
        <dbReference type="ChEBI" id="CHEBI:43474"/>
        <dbReference type="ChEBI" id="CHEBI:58359"/>
        <dbReference type="ChEBI" id="CHEBI:78520"/>
        <dbReference type="ChEBI" id="CHEBI:78521"/>
        <dbReference type="ChEBI" id="CHEBI:456216"/>
    </reaction>
</comment>
<comment type="subunit">
    <text>Subunit of the heterotrimeric GatFAB amidotransferase (AdT) complex, composed of A (HER2), B (PET112) and F (YGR102C) subunits.</text>
</comment>
<comment type="subcellular location">
    <subcellularLocation>
        <location evidence="1 2 4 5 6">Mitochondrion inner membrane</location>
        <topology evidence="1 2 4 5 6">Peripheral membrane protein</topology>
        <orientation evidence="1 2 4 5 6">Matrix side</orientation>
    </subcellularLocation>
</comment>
<comment type="miscellaneous">
    <text evidence="3">Present with 172 molecules/cell in log phase SD medium.</text>
</comment>
<comment type="miscellaneous">
    <text evidence="1">This protein may be expected to contain an N-terminal transit peptide but none has been predicted.</text>
</comment>
<comment type="similarity">
    <text evidence="1">Belongs to the GatF family.</text>
</comment>
<name>GATF_YEAST</name>
<protein>
    <recommendedName>
        <fullName evidence="1">Glutamyl-tRNA(Gln) amidotransferase subunit F, mitochondrial</fullName>
        <shortName evidence="1">Glu-AdT subunit F</shortName>
        <ecNumber evidence="1">6.3.5.-</ecNumber>
    </recommendedName>
</protein>
<dbReference type="EC" id="6.3.5.-" evidence="1"/>
<dbReference type="EMBL" id="Z72887">
    <property type="protein sequence ID" value="CAA97105.1"/>
    <property type="molecule type" value="Genomic_DNA"/>
</dbReference>
<dbReference type="EMBL" id="Z72888">
    <property type="protein sequence ID" value="CAA97107.1"/>
    <property type="molecule type" value="Genomic_DNA"/>
</dbReference>
<dbReference type="EMBL" id="AY558325">
    <property type="protein sequence ID" value="AAS56651.1"/>
    <property type="molecule type" value="Genomic_DNA"/>
</dbReference>
<dbReference type="EMBL" id="BK006941">
    <property type="protein sequence ID" value="DAA08195.1"/>
    <property type="molecule type" value="Genomic_DNA"/>
</dbReference>
<dbReference type="PIR" id="S64407">
    <property type="entry name" value="S64407"/>
</dbReference>
<dbReference type="RefSeq" id="NP_011616.3">
    <property type="nucleotide sequence ID" value="NM_001181231.3"/>
</dbReference>
<dbReference type="PDB" id="4N0H">
    <property type="method" value="X-ray"/>
    <property type="resolution" value="1.95 A"/>
    <property type="chains" value="F=24-183"/>
</dbReference>
<dbReference type="PDB" id="4N0I">
    <property type="method" value="X-ray"/>
    <property type="resolution" value="2.00 A"/>
    <property type="chains" value="F=24-183"/>
</dbReference>
<dbReference type="PDBsum" id="4N0H"/>
<dbReference type="PDBsum" id="4N0I"/>
<dbReference type="SMR" id="P53260"/>
<dbReference type="BioGRID" id="33345">
    <property type="interactions" value="34"/>
</dbReference>
<dbReference type="ComplexPortal" id="CPX-416">
    <property type="entry name" value="Glutamyl-tRNA(Gln) amidotransferase complex"/>
</dbReference>
<dbReference type="DIP" id="DIP-6840N"/>
<dbReference type="FunCoup" id="P53260">
    <property type="interactions" value="101"/>
</dbReference>
<dbReference type="IntAct" id="P53260">
    <property type="interactions" value="5"/>
</dbReference>
<dbReference type="MINT" id="P53260"/>
<dbReference type="STRING" id="4932.YGR102C"/>
<dbReference type="PaxDb" id="4932-YGR102C"/>
<dbReference type="PeptideAtlas" id="P53260"/>
<dbReference type="EnsemblFungi" id="YGR102C_mRNA">
    <property type="protein sequence ID" value="YGR102C"/>
    <property type="gene ID" value="YGR102C"/>
</dbReference>
<dbReference type="GeneID" id="852994"/>
<dbReference type="KEGG" id="sce:YGR102C"/>
<dbReference type="AGR" id="SGD:S000003334"/>
<dbReference type="SGD" id="S000003334">
    <property type="gene designation" value="GTF1"/>
</dbReference>
<dbReference type="VEuPathDB" id="FungiDB:YGR102C"/>
<dbReference type="eggNOG" id="ENOG502S3RS">
    <property type="taxonomic scope" value="Eukaryota"/>
</dbReference>
<dbReference type="HOGENOM" id="CLU_120617_0_0_1"/>
<dbReference type="InParanoid" id="P53260"/>
<dbReference type="OMA" id="WRLCRTH"/>
<dbReference type="OrthoDB" id="4053592at2759"/>
<dbReference type="BioCyc" id="YEAST:G3O-30812-MONOMER"/>
<dbReference type="BioGRID-ORCS" id="852994">
    <property type="hits" value="2 hits in 10 CRISPR screens"/>
</dbReference>
<dbReference type="EvolutionaryTrace" id="P53260"/>
<dbReference type="PRO" id="PR:P53260"/>
<dbReference type="Proteomes" id="UP000002311">
    <property type="component" value="Chromosome VII"/>
</dbReference>
<dbReference type="RNAct" id="P53260">
    <property type="molecule type" value="protein"/>
</dbReference>
<dbReference type="GO" id="GO:0030956">
    <property type="term" value="C:glutamyl-tRNA(Gln) amidotransferase complex"/>
    <property type="evidence" value="ECO:0000314"/>
    <property type="project" value="SGD"/>
</dbReference>
<dbReference type="GO" id="GO:0005743">
    <property type="term" value="C:mitochondrial inner membrane"/>
    <property type="evidence" value="ECO:0007669"/>
    <property type="project" value="UniProtKB-SubCell"/>
</dbReference>
<dbReference type="GO" id="GO:0005739">
    <property type="term" value="C:mitochondrion"/>
    <property type="evidence" value="ECO:0000314"/>
    <property type="project" value="ComplexPortal"/>
</dbReference>
<dbReference type="GO" id="GO:0005524">
    <property type="term" value="F:ATP binding"/>
    <property type="evidence" value="ECO:0007669"/>
    <property type="project" value="UniProtKB-KW"/>
</dbReference>
<dbReference type="GO" id="GO:0050567">
    <property type="term" value="F:glutaminyl-tRNA synthase (glutamine-hydrolyzing) activity"/>
    <property type="evidence" value="ECO:0000314"/>
    <property type="project" value="SGD"/>
</dbReference>
<dbReference type="GO" id="GO:0070681">
    <property type="term" value="P:glutaminyl-tRNAGln biosynthesis via transamidation"/>
    <property type="evidence" value="ECO:0000314"/>
    <property type="project" value="ComplexPortal"/>
</dbReference>
<dbReference type="GO" id="GO:0032543">
    <property type="term" value="P:mitochondrial translation"/>
    <property type="evidence" value="ECO:0007669"/>
    <property type="project" value="UniProtKB-UniRule"/>
</dbReference>
<dbReference type="CDD" id="cd21422">
    <property type="entry name" value="GatF"/>
    <property type="match status" value="1"/>
</dbReference>
<dbReference type="HAMAP" id="MF_03151">
    <property type="entry name" value="GatF"/>
    <property type="match status" value="1"/>
</dbReference>
<dbReference type="InterPro" id="IPR027499">
    <property type="entry name" value="GatF"/>
</dbReference>
<dbReference type="Pfam" id="PF20977">
    <property type="entry name" value="GatF"/>
    <property type="match status" value="1"/>
</dbReference>
<evidence type="ECO:0000255" key="1">
    <source>
        <dbReference type="HAMAP-Rule" id="MF_03151"/>
    </source>
</evidence>
<evidence type="ECO:0000269" key="2">
    <source>
    </source>
</evidence>
<evidence type="ECO:0000269" key="3">
    <source>
    </source>
</evidence>
<evidence type="ECO:0000269" key="4">
    <source>
    </source>
</evidence>
<evidence type="ECO:0000269" key="5">
    <source>
    </source>
</evidence>
<evidence type="ECO:0000269" key="6">
    <source>
    </source>
</evidence>
<evidence type="ECO:0000305" key="7"/>
<evidence type="ECO:0007829" key="8">
    <source>
        <dbReference type="PDB" id="4N0H"/>
    </source>
</evidence>
<gene>
    <name evidence="1" type="primary">GTF1</name>
    <name type="ordered locus">YGR102C</name>
</gene>
<keyword id="KW-0002">3D-structure</keyword>
<keyword id="KW-0067">ATP-binding</keyword>
<keyword id="KW-0436">Ligase</keyword>
<keyword id="KW-0472">Membrane</keyword>
<keyword id="KW-0496">Mitochondrion</keyword>
<keyword id="KW-0999">Mitochondrion inner membrane</keyword>
<keyword id="KW-0547">Nucleotide-binding</keyword>
<keyword id="KW-0648">Protein biosynthesis</keyword>
<keyword id="KW-1185">Reference proteome</keyword>
<sequence length="183" mass="20787">MYKTWRLCRTHTVGGLCHDGSHRFVSTGGAKIGKKFENMNQIRDYLSRPVWSVHEYLGINTKEEKLEPPSAEAVKKLLRLSGLPLEGADIKEIQMRLAKQLSFINKLHNIPVEGEKHTKEYDARLVQRNTKQLNYTKLLEGISHQKQDAELGEVSGSWKATGLAAESKNAYFVVKEGLLKNRK</sequence>
<organism>
    <name type="scientific">Saccharomyces cerevisiae (strain ATCC 204508 / S288c)</name>
    <name type="common">Baker's yeast</name>
    <dbReference type="NCBI Taxonomy" id="559292"/>
    <lineage>
        <taxon>Eukaryota</taxon>
        <taxon>Fungi</taxon>
        <taxon>Dikarya</taxon>
        <taxon>Ascomycota</taxon>
        <taxon>Saccharomycotina</taxon>
        <taxon>Saccharomycetes</taxon>
        <taxon>Saccharomycetales</taxon>
        <taxon>Saccharomycetaceae</taxon>
        <taxon>Saccharomyces</taxon>
    </lineage>
</organism>
<proteinExistence type="evidence at protein level"/>